<name>DNAE2_BDEBA</name>
<gene>
    <name evidence="1" type="primary">dnaE2</name>
    <name type="ordered locus">Bd0384</name>
</gene>
<protein>
    <recommendedName>
        <fullName evidence="1">Error-prone DNA polymerase</fullName>
        <ecNumber evidence="1">2.7.7.7</ecNumber>
    </recommendedName>
</protein>
<keyword id="KW-0963">Cytoplasm</keyword>
<keyword id="KW-0227">DNA damage</keyword>
<keyword id="KW-0234">DNA repair</keyword>
<keyword id="KW-0235">DNA replication</keyword>
<keyword id="KW-0239">DNA-directed DNA polymerase</keyword>
<keyword id="KW-0548">Nucleotidyltransferase</keyword>
<keyword id="KW-1185">Reference proteome</keyword>
<keyword id="KW-0808">Transferase</keyword>
<organism>
    <name type="scientific">Bdellovibrio bacteriovorus (strain ATCC 15356 / DSM 50701 / NCIMB 9529 / HD100)</name>
    <dbReference type="NCBI Taxonomy" id="264462"/>
    <lineage>
        <taxon>Bacteria</taxon>
        <taxon>Pseudomonadati</taxon>
        <taxon>Bdellovibrionota</taxon>
        <taxon>Bdellovibrionia</taxon>
        <taxon>Bdellovibrionales</taxon>
        <taxon>Pseudobdellovibrionaceae</taxon>
        <taxon>Bdellovibrio</taxon>
    </lineage>
</organism>
<evidence type="ECO:0000255" key="1">
    <source>
        <dbReference type="HAMAP-Rule" id="MF_01902"/>
    </source>
</evidence>
<sequence length="1061" mass="121567">MTNKALIPSQNSRLPAKPRPRAKGFVELLGRSNFSFLQGASSPEEMVSQAVEFGYDGMALCDLNGLYGVVRGFQTIQSPSLFTASPQVKENFHYLIGSELTLTDESSVVLIPMNKQGYSHLCEILTLGKRQAAKGFSKLSLEQIEKYNQGLLCLALPPWTDERYEKLEKIFDNRLYLPLWRDLTWESQEFCRQGFALEEKYKAQLFVTQRPFMHSPERKPLFDVLTCTLHHTTLAEAKNKLIQNSERCLKSLEDISWLWQDRLDLVEKTVEISARVTFSLNEIRYRYPASSLPSGMTPTEYMRHLTLKGAESRYPEGIPDKALKQIEHELELIKDLQYEDYFLTLKEICDFASERKILYQGRGSAANSVVCFCLGLTAIDPVKMDLLFERFLSRERREPPDIDIDFEHSRREEVIQHIYEKYNERHAAMVCTVIRYRSRMAIRETAKVFGMPLAKINAMIKFMGRDGMKRLLDPAVAADFGMEPGPWKMFMALAQQLHGFPRHLGIHTGGFLITQDPITEMVPVEKATMNGRYVIQWNKDDVDFLRLMKIDVLSLGMLTCLRKCFDLLRDVKGRDYSLATLPADDKPTYDMICRAETVGVFQIESRAQMNTLPRMQPRNFYDLVIEIALIRPGPLQGGMVHPFLKLRQNPPKEIKYAHPALEPILKKTMGIPIFQEQVMKMVVAVADFTPGEADELRRVMSSAWKRKATMGGIEQRLRTGFARHGISSEYADQIFKTIEGFANYGFPESHSASFALLTYASCYLKCHYPDVFACGLLNSQPMGFYAPRTIIAEAQRNGVVVAPLDVQKSDYDYTIEKTAAGDLLRVGLRSIYGIPEVLIRRIEDSRKEEGLYIDLADFIRRTQLPRSVLLKLAAAGAFESFNSNVRELIWNLESLSLDQQSFLWGHPKEQFELGEDDDEPEHLPFESNWDRLRREYDSKGYSVESHPMSVLRTYLHSKSEALREKRFVPYFSSEDLKRMKTKTKVRVAGLVAITQRPPTAKGMCFITLEDEFGFVNIVIHPEIYQKDRTTIYTRSLLEIHGQVEKVGAITNIRAERILPLG</sequence>
<dbReference type="EC" id="2.7.7.7" evidence="1"/>
<dbReference type="EMBL" id="BX842647">
    <property type="protein sequence ID" value="CAE78371.1"/>
    <property type="molecule type" value="Genomic_DNA"/>
</dbReference>
<dbReference type="SMR" id="Q6MQS6"/>
<dbReference type="STRING" id="264462.Bd0384"/>
<dbReference type="KEGG" id="bba:Bd0384"/>
<dbReference type="eggNOG" id="COG0587">
    <property type="taxonomic scope" value="Bacteria"/>
</dbReference>
<dbReference type="HOGENOM" id="CLU_001600_4_0_7"/>
<dbReference type="Proteomes" id="UP000008080">
    <property type="component" value="Chromosome"/>
</dbReference>
<dbReference type="GO" id="GO:0005737">
    <property type="term" value="C:cytoplasm"/>
    <property type="evidence" value="ECO:0007669"/>
    <property type="project" value="UniProtKB-SubCell"/>
</dbReference>
<dbReference type="GO" id="GO:0008408">
    <property type="term" value="F:3'-5' exonuclease activity"/>
    <property type="evidence" value="ECO:0007669"/>
    <property type="project" value="InterPro"/>
</dbReference>
<dbReference type="GO" id="GO:0003887">
    <property type="term" value="F:DNA-directed DNA polymerase activity"/>
    <property type="evidence" value="ECO:0007669"/>
    <property type="project" value="UniProtKB-KW"/>
</dbReference>
<dbReference type="GO" id="GO:0006281">
    <property type="term" value="P:DNA repair"/>
    <property type="evidence" value="ECO:0007669"/>
    <property type="project" value="UniProtKB-KW"/>
</dbReference>
<dbReference type="GO" id="GO:0006260">
    <property type="term" value="P:DNA replication"/>
    <property type="evidence" value="ECO:0007669"/>
    <property type="project" value="UniProtKB-KW"/>
</dbReference>
<dbReference type="GO" id="GO:0009432">
    <property type="term" value="P:SOS response"/>
    <property type="evidence" value="ECO:0000269"/>
    <property type="project" value="CollecTF"/>
</dbReference>
<dbReference type="CDD" id="cd04485">
    <property type="entry name" value="DnaE_OBF"/>
    <property type="match status" value="1"/>
</dbReference>
<dbReference type="CDD" id="cd07434">
    <property type="entry name" value="PHP_PolIIIA_DnaE2"/>
    <property type="match status" value="1"/>
</dbReference>
<dbReference type="Gene3D" id="1.10.150.870">
    <property type="match status" value="1"/>
</dbReference>
<dbReference type="Gene3D" id="3.20.20.140">
    <property type="entry name" value="Metal-dependent hydrolases"/>
    <property type="match status" value="1"/>
</dbReference>
<dbReference type="Gene3D" id="2.40.50.140">
    <property type="entry name" value="Nucleic acid-binding proteins"/>
    <property type="match status" value="1"/>
</dbReference>
<dbReference type="HAMAP" id="MF_01902">
    <property type="entry name" value="DNApol_error_prone"/>
    <property type="match status" value="1"/>
</dbReference>
<dbReference type="InterPro" id="IPR011708">
    <property type="entry name" value="DNA_pol3_alpha_NTPase_dom"/>
</dbReference>
<dbReference type="InterPro" id="IPR040982">
    <property type="entry name" value="DNA_pol3_finger"/>
</dbReference>
<dbReference type="InterPro" id="IPR023073">
    <property type="entry name" value="DnaE2"/>
</dbReference>
<dbReference type="InterPro" id="IPR004805">
    <property type="entry name" value="DnaE2/DnaE/PolC"/>
</dbReference>
<dbReference type="InterPro" id="IPR029460">
    <property type="entry name" value="DNAPol_HHH"/>
</dbReference>
<dbReference type="InterPro" id="IPR012340">
    <property type="entry name" value="NA-bd_OB-fold"/>
</dbReference>
<dbReference type="InterPro" id="IPR004013">
    <property type="entry name" value="PHP_dom"/>
</dbReference>
<dbReference type="InterPro" id="IPR003141">
    <property type="entry name" value="Pol/His_phosphatase_N"/>
</dbReference>
<dbReference type="InterPro" id="IPR016195">
    <property type="entry name" value="Pol/histidinol_Pase-like"/>
</dbReference>
<dbReference type="NCBIfam" id="TIGR00594">
    <property type="entry name" value="polc"/>
    <property type="match status" value="1"/>
</dbReference>
<dbReference type="NCBIfam" id="NF004225">
    <property type="entry name" value="PRK05672.1"/>
    <property type="match status" value="1"/>
</dbReference>
<dbReference type="PANTHER" id="PTHR32294">
    <property type="entry name" value="DNA POLYMERASE III SUBUNIT ALPHA"/>
    <property type="match status" value="1"/>
</dbReference>
<dbReference type="PANTHER" id="PTHR32294:SF4">
    <property type="entry name" value="ERROR-PRONE DNA POLYMERASE"/>
    <property type="match status" value="1"/>
</dbReference>
<dbReference type="Pfam" id="PF07733">
    <property type="entry name" value="DNA_pol3_alpha"/>
    <property type="match status" value="1"/>
</dbReference>
<dbReference type="Pfam" id="PF17657">
    <property type="entry name" value="DNA_pol3_finger"/>
    <property type="match status" value="1"/>
</dbReference>
<dbReference type="Pfam" id="PF14579">
    <property type="entry name" value="HHH_6"/>
    <property type="match status" value="1"/>
</dbReference>
<dbReference type="Pfam" id="PF02811">
    <property type="entry name" value="PHP"/>
    <property type="match status" value="1"/>
</dbReference>
<dbReference type="SMART" id="SM00481">
    <property type="entry name" value="POLIIIAc"/>
    <property type="match status" value="1"/>
</dbReference>
<dbReference type="SUPFAM" id="SSF89550">
    <property type="entry name" value="PHP domain-like"/>
    <property type="match status" value="1"/>
</dbReference>
<comment type="function">
    <text evidence="1">DNA polymerase involved in damage-induced mutagenesis and translesion synthesis (TLS). It is not the major replicative DNA polymerase.</text>
</comment>
<comment type="catalytic activity">
    <reaction evidence="1">
        <text>DNA(n) + a 2'-deoxyribonucleoside 5'-triphosphate = DNA(n+1) + diphosphate</text>
        <dbReference type="Rhea" id="RHEA:22508"/>
        <dbReference type="Rhea" id="RHEA-COMP:17339"/>
        <dbReference type="Rhea" id="RHEA-COMP:17340"/>
        <dbReference type="ChEBI" id="CHEBI:33019"/>
        <dbReference type="ChEBI" id="CHEBI:61560"/>
        <dbReference type="ChEBI" id="CHEBI:173112"/>
        <dbReference type="EC" id="2.7.7.7"/>
    </reaction>
</comment>
<comment type="subcellular location">
    <subcellularLocation>
        <location evidence="1">Cytoplasm</location>
    </subcellularLocation>
</comment>
<comment type="similarity">
    <text evidence="1">Belongs to the DNA polymerase type-C family. DnaE2 subfamily.</text>
</comment>
<reference key="1">
    <citation type="journal article" date="2004" name="Science">
        <title>A predator unmasked: life cycle of Bdellovibrio bacteriovorus from a genomic perspective.</title>
        <authorList>
            <person name="Rendulic S."/>
            <person name="Jagtap P."/>
            <person name="Rosinus A."/>
            <person name="Eppinger M."/>
            <person name="Baar C."/>
            <person name="Lanz C."/>
            <person name="Keller H."/>
            <person name="Lambert C."/>
            <person name="Evans K.J."/>
            <person name="Goesmann A."/>
            <person name="Meyer F."/>
            <person name="Sockett R.E."/>
            <person name="Schuster S.C."/>
        </authorList>
    </citation>
    <scope>NUCLEOTIDE SEQUENCE [LARGE SCALE GENOMIC DNA]</scope>
    <source>
        <strain>ATCC 15356 / DSM 50701 / NCIMB 9529 / HD100</strain>
    </source>
</reference>
<accession>Q6MQS6</accession>
<feature type="chain" id="PRO_0000103366" description="Error-prone DNA polymerase">
    <location>
        <begin position="1"/>
        <end position="1061"/>
    </location>
</feature>
<proteinExistence type="inferred from homology"/>